<gene>
    <name evidence="1" type="primary">argB</name>
    <name type="ordered locus">GTNG_0672</name>
</gene>
<name>ARGB_GEOTN</name>
<comment type="function">
    <text evidence="1">Catalyzes the ATP-dependent phosphorylation of N-acetyl-L-glutamate.</text>
</comment>
<comment type="catalytic activity">
    <reaction evidence="1">
        <text>N-acetyl-L-glutamate + ATP = N-acetyl-L-glutamyl 5-phosphate + ADP</text>
        <dbReference type="Rhea" id="RHEA:14629"/>
        <dbReference type="ChEBI" id="CHEBI:30616"/>
        <dbReference type="ChEBI" id="CHEBI:44337"/>
        <dbReference type="ChEBI" id="CHEBI:57936"/>
        <dbReference type="ChEBI" id="CHEBI:456216"/>
        <dbReference type="EC" id="2.7.2.8"/>
    </reaction>
</comment>
<comment type="pathway">
    <text evidence="1">Amino-acid biosynthesis; L-arginine biosynthesis; N(2)-acetyl-L-ornithine from L-glutamate: step 2/4.</text>
</comment>
<comment type="subcellular location">
    <subcellularLocation>
        <location evidence="1">Cytoplasm</location>
    </subcellularLocation>
</comment>
<comment type="similarity">
    <text evidence="1">Belongs to the acetylglutamate kinase family. ArgB subfamily.</text>
</comment>
<evidence type="ECO:0000255" key="1">
    <source>
        <dbReference type="HAMAP-Rule" id="MF_00082"/>
    </source>
</evidence>
<feature type="chain" id="PRO_1000010500" description="Acetylglutamate kinase">
    <location>
        <begin position="1"/>
        <end position="258"/>
    </location>
</feature>
<feature type="binding site" evidence="1">
    <location>
        <begin position="41"/>
        <end position="42"/>
    </location>
    <ligand>
        <name>substrate</name>
    </ligand>
</feature>
<feature type="binding site" evidence="1">
    <location>
        <position position="63"/>
    </location>
    <ligand>
        <name>substrate</name>
    </ligand>
</feature>
<feature type="binding site" evidence="1">
    <location>
        <position position="156"/>
    </location>
    <ligand>
        <name>substrate</name>
    </ligand>
</feature>
<feature type="site" description="Transition state stabilizer" evidence="1">
    <location>
        <position position="8"/>
    </location>
</feature>
<feature type="site" description="Transition state stabilizer" evidence="1">
    <location>
        <position position="215"/>
    </location>
</feature>
<reference key="1">
    <citation type="journal article" date="2007" name="Proc. Natl. Acad. Sci. U.S.A.">
        <title>Genome and proteome of long-chain alkane degrading Geobacillus thermodenitrificans NG80-2 isolated from a deep-subsurface oil reservoir.</title>
        <authorList>
            <person name="Feng L."/>
            <person name="Wang W."/>
            <person name="Cheng J."/>
            <person name="Ren Y."/>
            <person name="Zhao G."/>
            <person name="Gao C."/>
            <person name="Tang Y."/>
            <person name="Liu X."/>
            <person name="Han W."/>
            <person name="Peng X."/>
            <person name="Liu R."/>
            <person name="Wang L."/>
        </authorList>
    </citation>
    <scope>NUCLEOTIDE SEQUENCE [LARGE SCALE GENOMIC DNA]</scope>
    <source>
        <strain>NG80-2</strain>
    </source>
</reference>
<proteinExistence type="inferred from homology"/>
<protein>
    <recommendedName>
        <fullName evidence="1">Acetylglutamate kinase</fullName>
        <ecNumber evidence="1">2.7.2.8</ecNumber>
    </recommendedName>
    <alternativeName>
        <fullName evidence="1">N-acetyl-L-glutamate 5-phosphotransferase</fullName>
    </alternativeName>
    <alternativeName>
        <fullName evidence="1">NAG kinase</fullName>
        <shortName evidence="1">NAGK</shortName>
    </alternativeName>
</protein>
<dbReference type="EC" id="2.7.2.8" evidence="1"/>
<dbReference type="EMBL" id="CP000557">
    <property type="protein sequence ID" value="ABO66052.1"/>
    <property type="molecule type" value="Genomic_DNA"/>
</dbReference>
<dbReference type="RefSeq" id="WP_008878997.1">
    <property type="nucleotide sequence ID" value="NC_009328.1"/>
</dbReference>
<dbReference type="SMR" id="A4IL48"/>
<dbReference type="GeneID" id="87621699"/>
<dbReference type="KEGG" id="gtn:GTNG_0672"/>
<dbReference type="eggNOG" id="COG0548">
    <property type="taxonomic scope" value="Bacteria"/>
</dbReference>
<dbReference type="HOGENOM" id="CLU_053680_1_0_9"/>
<dbReference type="UniPathway" id="UPA00068">
    <property type="reaction ID" value="UER00107"/>
</dbReference>
<dbReference type="Proteomes" id="UP000001578">
    <property type="component" value="Chromosome"/>
</dbReference>
<dbReference type="GO" id="GO:0005737">
    <property type="term" value="C:cytoplasm"/>
    <property type="evidence" value="ECO:0007669"/>
    <property type="project" value="UniProtKB-SubCell"/>
</dbReference>
<dbReference type="GO" id="GO:0003991">
    <property type="term" value="F:acetylglutamate kinase activity"/>
    <property type="evidence" value="ECO:0007669"/>
    <property type="project" value="UniProtKB-UniRule"/>
</dbReference>
<dbReference type="GO" id="GO:0005524">
    <property type="term" value="F:ATP binding"/>
    <property type="evidence" value="ECO:0007669"/>
    <property type="project" value="UniProtKB-UniRule"/>
</dbReference>
<dbReference type="GO" id="GO:0042450">
    <property type="term" value="P:arginine biosynthetic process via ornithine"/>
    <property type="evidence" value="ECO:0007669"/>
    <property type="project" value="UniProtKB-UniRule"/>
</dbReference>
<dbReference type="GO" id="GO:0006526">
    <property type="term" value="P:L-arginine biosynthetic process"/>
    <property type="evidence" value="ECO:0007669"/>
    <property type="project" value="UniProtKB-UniPathway"/>
</dbReference>
<dbReference type="CDD" id="cd04238">
    <property type="entry name" value="AAK_NAGK-like"/>
    <property type="match status" value="1"/>
</dbReference>
<dbReference type="FunFam" id="3.40.1160.10:FF:000004">
    <property type="entry name" value="Acetylglutamate kinase"/>
    <property type="match status" value="1"/>
</dbReference>
<dbReference type="Gene3D" id="3.40.1160.10">
    <property type="entry name" value="Acetylglutamate kinase-like"/>
    <property type="match status" value="1"/>
</dbReference>
<dbReference type="HAMAP" id="MF_00082">
    <property type="entry name" value="ArgB"/>
    <property type="match status" value="1"/>
</dbReference>
<dbReference type="InterPro" id="IPR036393">
    <property type="entry name" value="AceGlu_kinase-like_sf"/>
</dbReference>
<dbReference type="InterPro" id="IPR004662">
    <property type="entry name" value="AcgluKinase_fam"/>
</dbReference>
<dbReference type="InterPro" id="IPR037528">
    <property type="entry name" value="ArgB"/>
</dbReference>
<dbReference type="InterPro" id="IPR001048">
    <property type="entry name" value="Asp/Glu/Uridylate_kinase"/>
</dbReference>
<dbReference type="InterPro" id="IPR001057">
    <property type="entry name" value="Glu/AcGlu_kinase"/>
</dbReference>
<dbReference type="NCBIfam" id="TIGR00761">
    <property type="entry name" value="argB"/>
    <property type="match status" value="1"/>
</dbReference>
<dbReference type="PANTHER" id="PTHR23342">
    <property type="entry name" value="N-ACETYLGLUTAMATE SYNTHASE"/>
    <property type="match status" value="1"/>
</dbReference>
<dbReference type="PANTHER" id="PTHR23342:SF0">
    <property type="entry name" value="N-ACETYLGLUTAMATE SYNTHASE, MITOCHONDRIAL"/>
    <property type="match status" value="1"/>
</dbReference>
<dbReference type="Pfam" id="PF00696">
    <property type="entry name" value="AA_kinase"/>
    <property type="match status" value="1"/>
</dbReference>
<dbReference type="PIRSF" id="PIRSF000728">
    <property type="entry name" value="NAGK"/>
    <property type="match status" value="1"/>
</dbReference>
<dbReference type="PRINTS" id="PR00474">
    <property type="entry name" value="GLU5KINASE"/>
</dbReference>
<dbReference type="SUPFAM" id="SSF53633">
    <property type="entry name" value="Carbamate kinase-like"/>
    <property type="match status" value="1"/>
</dbReference>
<keyword id="KW-0028">Amino-acid biosynthesis</keyword>
<keyword id="KW-0055">Arginine biosynthesis</keyword>
<keyword id="KW-0067">ATP-binding</keyword>
<keyword id="KW-0963">Cytoplasm</keyword>
<keyword id="KW-0418">Kinase</keyword>
<keyword id="KW-0547">Nucleotide-binding</keyword>
<keyword id="KW-0808">Transferase</keyword>
<accession>A4IL48</accession>
<organism>
    <name type="scientific">Geobacillus thermodenitrificans (strain NG80-2)</name>
    <dbReference type="NCBI Taxonomy" id="420246"/>
    <lineage>
        <taxon>Bacteria</taxon>
        <taxon>Bacillati</taxon>
        <taxon>Bacillota</taxon>
        <taxon>Bacilli</taxon>
        <taxon>Bacillales</taxon>
        <taxon>Anoxybacillaceae</taxon>
        <taxon>Geobacillus</taxon>
    </lineage>
</organism>
<sequence>MENTVVIKCGGSVLDELSPAFFASVKTMREQGMNVVIVHGGGPEIGKMLKQLNVRSEFVNGLRKTTKEVLAVVEMVLSGKVNKQLVTMFKQHGLPAVGISGVDGGLLEAEPIDGIKLGYVGRVTAVRVDLLQTLLAANYIPVISPLGVGRSGQTYNINADTAAGAIAAAIGANQLAFVTNVPGLLQDGTLIGEATAETVEQLLKDGVITGGMIPKVKAALSALSDALPKVMIVSGKTPFYEQGTWHGTTIRKEVGAYL</sequence>